<dbReference type="EMBL" id="CY005676">
    <property type="status" value="NOT_ANNOTATED_CDS"/>
    <property type="molecule type" value="Genomic_RNA"/>
</dbReference>
<dbReference type="SMR" id="P0CK91"/>
<dbReference type="Proteomes" id="UP000008575">
    <property type="component" value="Genome"/>
</dbReference>
<dbReference type="GO" id="GO:0003723">
    <property type="term" value="F:RNA binding"/>
    <property type="evidence" value="ECO:0007669"/>
    <property type="project" value="InterPro"/>
</dbReference>
<dbReference type="GO" id="GO:0039694">
    <property type="term" value="P:viral RNA genome replication"/>
    <property type="evidence" value="ECO:0007669"/>
    <property type="project" value="InterPro"/>
</dbReference>
<dbReference type="GO" id="GO:0075523">
    <property type="term" value="P:viral translational frameshifting"/>
    <property type="evidence" value="ECO:0007669"/>
    <property type="project" value="UniProtKB-KW"/>
</dbReference>
<dbReference type="FunFam" id="3.40.91.90:FF:000001">
    <property type="entry name" value="Polymerase acidic protein"/>
    <property type="match status" value="1"/>
</dbReference>
<dbReference type="Gene3D" id="3.40.91.90">
    <property type="entry name" value="Influenza RNA-dependent RNA polymerase subunit PA, endonuclease domain"/>
    <property type="match status" value="1"/>
</dbReference>
<dbReference type="InterPro" id="IPR001009">
    <property type="entry name" value="PA/PA-X"/>
</dbReference>
<dbReference type="InterPro" id="IPR038372">
    <property type="entry name" value="PA/PA-X_sf"/>
</dbReference>
<dbReference type="Pfam" id="PF00603">
    <property type="entry name" value="Flu_PA"/>
    <property type="match status" value="1"/>
</dbReference>
<keyword id="KW-1132">Decay of host mRNAs by virus</keyword>
<keyword id="KW-1262">Eukaryotic host gene expression shutoff by virus</keyword>
<keyword id="KW-1035">Host cytoplasm</keyword>
<keyword id="KW-1190">Host gene expression shutoff by virus</keyword>
<keyword id="KW-1192">Host mRNA suppression by virus</keyword>
<keyword id="KW-1048">Host nucleus</keyword>
<keyword id="KW-0945">Host-virus interaction</keyword>
<keyword id="KW-0688">Ribosomal frameshifting</keyword>
<comment type="function">
    <text evidence="1 4">Plays a major role in the shutoff of the host protein expression by cleaving mRNAs probably via an endonuclease activity. This host shutoff allows the virus to escape from the host antiviral response (By similarity). Hijacks host RNA splicing machinery to selectively target host RNAs containing introns for destruction. This may explain the preferential degradation of RNAs that have undergone co- or post-transcriptional processing (By similarity).</text>
</comment>
<comment type="subcellular location">
    <subcellularLocation>
        <location evidence="4">Host cytoplasm</location>
    </subcellularLocation>
    <subcellularLocation>
        <location evidence="4">Host nucleus</location>
    </subcellularLocation>
</comment>
<comment type="alternative products">
    <event type="ribosomal frameshifting"/>
    <isoform>
        <id>P0CK91-1</id>
        <name>PA-X</name>
        <sequence type="displayed"/>
    </isoform>
    <isoform>
        <id>Q20PL7-1</id>
        <name>PA</name>
        <sequence type="external"/>
    </isoform>
</comment>
<comment type="domain">
    <text evidence="1 4">The probable endonuclease active site in the N-terminus and the basic amino acid cluster in the C-terminus are important for the shutoff activity. The C-terminus acts as a nuclear localization signal (By similarity). The C-terminus is recruited to host protein complexes involved in nuclear Pol II RNA processing (By similarity).</text>
</comment>
<comment type="similarity">
    <text evidence="5">Belongs to the influenza viruses PA-X family.</text>
</comment>
<protein>
    <recommendedName>
        <fullName>Protein PA-X</fullName>
    </recommendedName>
</protein>
<reference key="1">
    <citation type="journal article" date="2006" name="Science">
        <title>Large-scale sequence analysis of avian influenza isolates.</title>
        <authorList>
            <person name="Obenauer J.C."/>
            <person name="Denson J."/>
            <person name="Mehta P.K."/>
            <person name="Su X."/>
            <person name="Mukatira S."/>
            <person name="Finkelstein D.B."/>
            <person name="Xu X."/>
            <person name="Wang J."/>
            <person name="Ma J."/>
            <person name="Fan Y."/>
            <person name="Rakestraw K.M."/>
            <person name="Webster R.G."/>
            <person name="Hoffmann E."/>
            <person name="Krauss S."/>
            <person name="Zheng J."/>
            <person name="Zhang Z."/>
            <person name="Naeve C.W."/>
        </authorList>
    </citation>
    <scope>NUCLEOTIDE SEQUENCE [GENOMIC RNA]</scope>
</reference>
<organism>
    <name type="scientific">Influenza A virus (strain A/Grey teal/Australia/2/1979 H4N4)</name>
    <dbReference type="NCBI Taxonomy" id="402464"/>
    <lineage>
        <taxon>Viruses</taxon>
        <taxon>Riboviria</taxon>
        <taxon>Orthornavirae</taxon>
        <taxon>Negarnaviricota</taxon>
        <taxon>Polyploviricotina</taxon>
        <taxon>Insthoviricetes</taxon>
        <taxon>Articulavirales</taxon>
        <taxon>Orthomyxoviridae</taxon>
        <taxon>Alphainfluenzavirus</taxon>
        <taxon>Alphainfluenzavirus influenzae</taxon>
        <taxon>Influenza A virus</taxon>
    </lineage>
</organism>
<accession>P0CK91</accession>
<feature type="chain" id="PRO_0000419374" description="Protein PA-X">
    <location>
        <begin position="1"/>
        <end position="252"/>
    </location>
</feature>
<feature type="active site" evidence="2">
    <location>
        <position position="80"/>
    </location>
</feature>
<feature type="active site" evidence="2">
    <location>
        <position position="108"/>
    </location>
</feature>
<feature type="site" description="Important for efficient shutoff activity and nuclear localization" evidence="4">
    <location>
        <position position="195"/>
    </location>
</feature>
<feature type="site" description="Important for efficient shutoff activity and nuclear localization" evidence="4">
    <location>
        <position position="198"/>
    </location>
</feature>
<feature type="site" description="Important for efficient shutoff activity and nuclear localization" evidence="4">
    <location>
        <position position="199"/>
    </location>
</feature>
<feature type="site" description="Important for efficient shutoff activity" evidence="3">
    <location>
        <position position="202"/>
    </location>
</feature>
<feature type="site" description="Important for efficient shutoff activity" evidence="3">
    <location>
        <position position="203"/>
    </location>
</feature>
<feature type="site" description="Important for efficient shutoff activity" evidence="3">
    <location>
        <position position="206"/>
    </location>
</feature>
<gene>
    <name type="primary">PA</name>
</gene>
<proteinExistence type="inferred from homology"/>
<evidence type="ECO:0000250" key="1">
    <source>
        <dbReference type="UniProtKB" id="P0CK64"/>
    </source>
</evidence>
<evidence type="ECO:0000250" key="2">
    <source>
        <dbReference type="UniProtKB" id="P0CK68"/>
    </source>
</evidence>
<evidence type="ECO:0000250" key="3">
    <source>
        <dbReference type="UniProtKB" id="P0DJW8"/>
    </source>
</evidence>
<evidence type="ECO:0000250" key="4">
    <source>
        <dbReference type="UniProtKB" id="P0DXO5"/>
    </source>
</evidence>
<evidence type="ECO:0000305" key="5"/>
<organismHost>
    <name type="scientific">Aves</name>
    <dbReference type="NCBI Taxonomy" id="8782"/>
</organismHost>
<name>PAX_I79A7</name>
<sequence length="252" mass="29414">MEDFVRQCFNPMIVELAEKAMKEYGEDPKIETNKFAAICTHLEVCFMYSDFHFIDERGESIIVESGDPNALLKHRFEIIEGRDRTMAWTVVNSICNTTGVEKPKFLPDLYDYKENRFIEIGVTRREVHIYYLEKANKIKSEKTHIHIFSFTGEEMATKADYTLDEESRARIKTRLFTIRQEMASRGLWDSFVNPREAKRQLKKDLKLQEPCAGLPTKVSHRTSPALKTLEPMWMDSNRTAALRASFLKCQKK</sequence>